<accession>B8DSQ1</accession>
<comment type="similarity">
    <text evidence="1">Belongs to the bacterial ribosomal protein bL35 family.</text>
</comment>
<protein>
    <recommendedName>
        <fullName evidence="1">Large ribosomal subunit protein bL35</fullName>
    </recommendedName>
    <alternativeName>
        <fullName evidence="3">50S ribosomal protein L35</fullName>
    </alternativeName>
</protein>
<gene>
    <name evidence="1" type="primary">rpmI</name>
    <name type="ordered locus">BLA_0737</name>
</gene>
<name>RL35_BIFA0</name>
<feature type="chain" id="PRO_1000146122" description="Large ribosomal subunit protein bL35">
    <location>
        <begin position="1"/>
        <end position="63"/>
    </location>
</feature>
<feature type="region of interest" description="Disordered" evidence="2">
    <location>
        <begin position="26"/>
        <end position="50"/>
    </location>
</feature>
<sequence>MPKMKTKTAAAKRVRLTATGKVMHAGSGMRHNLEHKSARKRRALKRDDVLQTAQAKKMKGLLG</sequence>
<proteinExistence type="inferred from homology"/>
<dbReference type="EMBL" id="CP001213">
    <property type="protein sequence ID" value="ACL29030.1"/>
    <property type="molecule type" value="Genomic_DNA"/>
</dbReference>
<dbReference type="RefSeq" id="WP_004218698.1">
    <property type="nucleotide sequence ID" value="NC_011835.1"/>
</dbReference>
<dbReference type="SMR" id="B8DSQ1"/>
<dbReference type="STRING" id="442563.BLA_0737"/>
<dbReference type="GeneID" id="29695112"/>
<dbReference type="KEGG" id="bla:BLA_0737"/>
<dbReference type="HOGENOM" id="CLU_169643_4_2_11"/>
<dbReference type="Proteomes" id="UP000002456">
    <property type="component" value="Chromosome"/>
</dbReference>
<dbReference type="GO" id="GO:1990904">
    <property type="term" value="C:ribonucleoprotein complex"/>
    <property type="evidence" value="ECO:0007669"/>
    <property type="project" value="UniProtKB-KW"/>
</dbReference>
<dbReference type="GO" id="GO:0005840">
    <property type="term" value="C:ribosome"/>
    <property type="evidence" value="ECO:0007669"/>
    <property type="project" value="UniProtKB-KW"/>
</dbReference>
<dbReference type="GO" id="GO:0003735">
    <property type="term" value="F:structural constituent of ribosome"/>
    <property type="evidence" value="ECO:0007669"/>
    <property type="project" value="InterPro"/>
</dbReference>
<dbReference type="GO" id="GO:0006412">
    <property type="term" value="P:translation"/>
    <property type="evidence" value="ECO:0007669"/>
    <property type="project" value="UniProtKB-UniRule"/>
</dbReference>
<dbReference type="FunFam" id="4.10.410.60:FF:000001">
    <property type="entry name" value="50S ribosomal protein L35"/>
    <property type="match status" value="1"/>
</dbReference>
<dbReference type="Gene3D" id="4.10.410.60">
    <property type="match status" value="1"/>
</dbReference>
<dbReference type="HAMAP" id="MF_00514">
    <property type="entry name" value="Ribosomal_bL35"/>
    <property type="match status" value="1"/>
</dbReference>
<dbReference type="InterPro" id="IPR001706">
    <property type="entry name" value="Ribosomal_bL35"/>
</dbReference>
<dbReference type="InterPro" id="IPR021137">
    <property type="entry name" value="Ribosomal_bL35-like"/>
</dbReference>
<dbReference type="InterPro" id="IPR018265">
    <property type="entry name" value="Ribosomal_bL35_CS"/>
</dbReference>
<dbReference type="InterPro" id="IPR037229">
    <property type="entry name" value="Ribosomal_bL35_sf"/>
</dbReference>
<dbReference type="NCBIfam" id="TIGR00001">
    <property type="entry name" value="rpmI_bact"/>
    <property type="match status" value="1"/>
</dbReference>
<dbReference type="Pfam" id="PF01632">
    <property type="entry name" value="Ribosomal_L35p"/>
    <property type="match status" value="1"/>
</dbReference>
<dbReference type="PRINTS" id="PR00064">
    <property type="entry name" value="RIBOSOMALL35"/>
</dbReference>
<dbReference type="SUPFAM" id="SSF143034">
    <property type="entry name" value="L35p-like"/>
    <property type="match status" value="1"/>
</dbReference>
<dbReference type="PROSITE" id="PS00936">
    <property type="entry name" value="RIBOSOMAL_L35"/>
    <property type="match status" value="1"/>
</dbReference>
<evidence type="ECO:0000255" key="1">
    <source>
        <dbReference type="HAMAP-Rule" id="MF_00514"/>
    </source>
</evidence>
<evidence type="ECO:0000256" key="2">
    <source>
        <dbReference type="SAM" id="MobiDB-lite"/>
    </source>
</evidence>
<evidence type="ECO:0000305" key="3"/>
<reference key="1">
    <citation type="journal article" date="2009" name="J. Bacteriol.">
        <title>Genome sequence of the probiotic bacterium Bifidobacterium animalis subsp. lactis AD011.</title>
        <authorList>
            <person name="Kim J.F."/>
            <person name="Jeong H."/>
            <person name="Yu D.S."/>
            <person name="Choi S.-H."/>
            <person name="Hur C.-G."/>
            <person name="Park M.-S."/>
            <person name="Yoon S.H."/>
            <person name="Kim D.-W."/>
            <person name="Ji G.E."/>
            <person name="Park H.-S."/>
            <person name="Oh T.K."/>
        </authorList>
    </citation>
    <scope>NUCLEOTIDE SEQUENCE [LARGE SCALE GENOMIC DNA]</scope>
    <source>
        <strain>AD011</strain>
    </source>
</reference>
<organism>
    <name type="scientific">Bifidobacterium animalis subsp. lactis (strain AD011)</name>
    <dbReference type="NCBI Taxonomy" id="442563"/>
    <lineage>
        <taxon>Bacteria</taxon>
        <taxon>Bacillati</taxon>
        <taxon>Actinomycetota</taxon>
        <taxon>Actinomycetes</taxon>
        <taxon>Bifidobacteriales</taxon>
        <taxon>Bifidobacteriaceae</taxon>
        <taxon>Bifidobacterium</taxon>
    </lineage>
</organism>
<keyword id="KW-1185">Reference proteome</keyword>
<keyword id="KW-0687">Ribonucleoprotein</keyword>
<keyword id="KW-0689">Ribosomal protein</keyword>